<protein>
    <recommendedName>
        <fullName evidence="10">Phosphatidylinositol transfer protein PDR17</fullName>
        <shortName evidence="10">PITP</shortName>
    </recommendedName>
    <alternativeName>
        <fullName evidence="10">Phosphatidylserine transport B pathway protein 2</fullName>
    </alternativeName>
    <alternativeName>
        <fullName evidence="12">Pleiotropic drug resistance protein 17</fullName>
    </alternativeName>
    <alternativeName>
        <fullName evidence="11">SEC14 homolog 3</fullName>
    </alternativeName>
</protein>
<keyword id="KW-0963">Cytoplasm</keyword>
<keyword id="KW-0256">Endoplasmic reticulum</keyword>
<keyword id="KW-0445">Lipid transport</keyword>
<keyword id="KW-0492">Microsome</keyword>
<keyword id="KW-1185">Reference proteome</keyword>
<keyword id="KW-0813">Transport</keyword>
<reference key="1">
    <citation type="journal article" date="1996" name="Yeast">
        <title>The sequence of a 24,152 bp segment from the left arm of chromosome XIV from Saccharomyces cerevisiae between the BNI1 and the POL2 genes.</title>
        <authorList>
            <person name="Sen-Gupta M."/>
            <person name="Lyck R."/>
            <person name="Fleig U."/>
            <person name="Niedenthal R.K."/>
            <person name="Hegemann J.H."/>
        </authorList>
    </citation>
    <scope>NUCLEOTIDE SEQUENCE [GENOMIC DNA]</scope>
    <source>
        <strain>ATCC 96604 / S288c / FY1679</strain>
    </source>
</reference>
<reference key="2">
    <citation type="journal article" date="1997" name="Nature">
        <title>The nucleotide sequence of Saccharomyces cerevisiae chromosome XIV and its evolutionary implications.</title>
        <authorList>
            <person name="Philippsen P."/>
            <person name="Kleine K."/>
            <person name="Poehlmann R."/>
            <person name="Duesterhoeft A."/>
            <person name="Hamberg K."/>
            <person name="Hegemann J.H."/>
            <person name="Obermaier B."/>
            <person name="Urrestarazu L.A."/>
            <person name="Aert R."/>
            <person name="Albermann K."/>
            <person name="Altmann R."/>
            <person name="Andre B."/>
            <person name="Baladron V."/>
            <person name="Ballesta J.P.G."/>
            <person name="Becam A.-M."/>
            <person name="Beinhauer J.D."/>
            <person name="Boskovic J."/>
            <person name="Buitrago M.J."/>
            <person name="Bussereau F."/>
            <person name="Coster F."/>
            <person name="Crouzet M."/>
            <person name="D'Angelo M."/>
            <person name="Dal Pero F."/>
            <person name="De Antoni A."/>
            <person name="del Rey F."/>
            <person name="Doignon F."/>
            <person name="Domdey H."/>
            <person name="Dubois E."/>
            <person name="Fiedler T.A."/>
            <person name="Fleig U."/>
            <person name="Floeth M."/>
            <person name="Fritz C."/>
            <person name="Gaillardin C."/>
            <person name="Garcia-Cantalejo J.M."/>
            <person name="Glansdorff N."/>
            <person name="Goffeau A."/>
            <person name="Gueldener U."/>
            <person name="Herbert C.J."/>
            <person name="Heumann K."/>
            <person name="Heuss-Neitzel D."/>
            <person name="Hilbert H."/>
            <person name="Hinni K."/>
            <person name="Iraqui Houssaini I."/>
            <person name="Jacquet M."/>
            <person name="Jimenez A."/>
            <person name="Jonniaux J.-L."/>
            <person name="Karpfinger-Hartl L."/>
            <person name="Lanfranchi G."/>
            <person name="Lepingle A."/>
            <person name="Levesque H."/>
            <person name="Lyck R."/>
            <person name="Maftahi M."/>
            <person name="Mallet L."/>
            <person name="Maurer C.T.C."/>
            <person name="Messenguy F."/>
            <person name="Mewes H.-W."/>
            <person name="Moestl D."/>
            <person name="Nasr F."/>
            <person name="Nicaud J.-M."/>
            <person name="Niedenthal R.K."/>
            <person name="Pandolfo D."/>
            <person name="Pierard A."/>
            <person name="Piravandi E."/>
            <person name="Planta R.J."/>
            <person name="Pohl T.M."/>
            <person name="Purnelle B."/>
            <person name="Rebischung C."/>
            <person name="Remacha M.A."/>
            <person name="Revuelta J.L."/>
            <person name="Rinke M."/>
            <person name="Saiz J.E."/>
            <person name="Sartorello F."/>
            <person name="Scherens B."/>
            <person name="Sen-Gupta M."/>
            <person name="Soler-Mira A."/>
            <person name="Urbanus J.H.M."/>
            <person name="Valle G."/>
            <person name="Van Dyck L."/>
            <person name="Verhasselt P."/>
            <person name="Vierendeels F."/>
            <person name="Vissers S."/>
            <person name="Voet M."/>
            <person name="Volckaert G."/>
            <person name="Wach A."/>
            <person name="Wambutt R."/>
            <person name="Wedler H."/>
            <person name="Zollner A."/>
            <person name="Hani J."/>
        </authorList>
    </citation>
    <scope>NUCLEOTIDE SEQUENCE [LARGE SCALE GENOMIC DNA]</scope>
    <source>
        <strain>ATCC 204508 / S288c</strain>
    </source>
</reference>
<reference key="3">
    <citation type="journal article" date="2014" name="G3 (Bethesda)">
        <title>The reference genome sequence of Saccharomyces cerevisiae: Then and now.</title>
        <authorList>
            <person name="Engel S.R."/>
            <person name="Dietrich F.S."/>
            <person name="Fisk D.G."/>
            <person name="Binkley G."/>
            <person name="Balakrishnan R."/>
            <person name="Costanzo M.C."/>
            <person name="Dwight S.S."/>
            <person name="Hitz B.C."/>
            <person name="Karra K."/>
            <person name="Nash R.S."/>
            <person name="Weng S."/>
            <person name="Wong E.D."/>
            <person name="Lloyd P."/>
            <person name="Skrzypek M.S."/>
            <person name="Miyasato S.R."/>
            <person name="Simison M."/>
            <person name="Cherry J.M."/>
        </authorList>
    </citation>
    <scope>GENOME REANNOTATION</scope>
    <source>
        <strain>ATCC 204508 / S288c</strain>
    </source>
</reference>
<reference key="4">
    <citation type="journal article" date="2007" name="Genome Res.">
        <title>Approaching a complete repository of sequence-verified protein-encoding clones for Saccharomyces cerevisiae.</title>
        <authorList>
            <person name="Hu Y."/>
            <person name="Rolfs A."/>
            <person name="Bhullar B."/>
            <person name="Murthy T.V.S."/>
            <person name="Zhu C."/>
            <person name="Berger M.F."/>
            <person name="Camargo A.A."/>
            <person name="Kelley F."/>
            <person name="McCarron S."/>
            <person name="Jepson D."/>
            <person name="Richardson A."/>
            <person name="Raphael J."/>
            <person name="Moreira D."/>
            <person name="Taycher E."/>
            <person name="Zuo D."/>
            <person name="Mohr S."/>
            <person name="Kane M.F."/>
            <person name="Williamson J."/>
            <person name="Simpson A.J.G."/>
            <person name="Bulyk M.L."/>
            <person name="Harlow E."/>
            <person name="Marsischky G."/>
            <person name="Kolodner R.D."/>
            <person name="LaBaer J."/>
        </authorList>
    </citation>
    <scope>NUCLEOTIDE SEQUENCE [GENOMIC DNA]</scope>
    <source>
        <strain>ATCC 204508 / S288c</strain>
    </source>
</reference>
<reference key="5">
    <citation type="journal article" date="1999" name="J. Biol. Chem.">
        <title>PDR16 and PDR17, two homologous genes of Saccharomyces cerevisiae, affect lipid biosynthesis and resistance to multiple drugs.</title>
        <authorList>
            <person name="van den Hazel H.B."/>
            <person name="Pichler H."/>
            <person name="do Valle Matta M.A."/>
            <person name="Leitner E."/>
            <person name="Goffeau A."/>
            <person name="Daum G."/>
        </authorList>
    </citation>
    <scope>FUNCTION</scope>
</reference>
<reference key="6">
    <citation type="journal article" date="2000" name="J. Biol. Chem.">
        <title>A new gene involved in the transport-dependent metabolism of phosphatidylserine, PSTB2/PDR17, shares sequence similarity with the gene encoding the phosphatidylinositol/phosphatidylcholine transfer protein, SEC14.</title>
        <authorList>
            <person name="Wu W.-I."/>
            <person name="Routt S.M."/>
            <person name="Bankaitis V.A."/>
            <person name="Voelker D.R."/>
        </authorList>
    </citation>
    <scope>FUNCTION</scope>
</reference>
<reference key="7">
    <citation type="journal article" date="2000" name="Mol. Biol. Cell">
        <title>Identification of a novel family of nonclassic yeast phosphatidylinositol transfer proteins whose function modulates phospholipase D activity and Sec14p-independent cell growth.</title>
        <authorList>
            <person name="Li X."/>
            <person name="Routt S.M."/>
            <person name="Xie Z."/>
            <person name="Cui X."/>
            <person name="Fang M."/>
            <person name="Kearns M.A."/>
            <person name="Bard M."/>
            <person name="Kirsch D.R."/>
            <person name="Bankaitis V.A."/>
        </authorList>
    </citation>
    <scope>FUNCTION</scope>
    <scope>CATALYTIC ACTIVITY</scope>
</reference>
<reference key="8">
    <citation type="journal article" date="2003" name="Eur. J. Biochem.">
        <title>Subcellular localization of yeast Sec14 homologues and their involvement in regulation of phospholipid turnover.</title>
        <authorList>
            <person name="Schnabl M."/>
            <person name="Oskolkova O.V."/>
            <person name="Holic R."/>
            <person name="Brezna B."/>
            <person name="Pichler H."/>
            <person name="Zagorsek M."/>
            <person name="Kohlwein S.D."/>
            <person name="Paltauf F."/>
            <person name="Daum G."/>
            <person name="Griac P."/>
        </authorList>
    </citation>
    <scope>SUBCELLULAR LOCATION</scope>
</reference>
<reference key="9">
    <citation type="journal article" date="2003" name="Nature">
        <title>Global analysis of protein localization in budding yeast.</title>
        <authorList>
            <person name="Huh W.-K."/>
            <person name="Falvo J.V."/>
            <person name="Gerke L.C."/>
            <person name="Carroll A.S."/>
            <person name="Howson R.W."/>
            <person name="Weissman J.S."/>
            <person name="O'Shea E.K."/>
        </authorList>
    </citation>
    <scope>SUBCELLULAR LOCATION [LARGE SCALE ANALYSIS]</scope>
</reference>
<reference key="10">
    <citation type="journal article" date="2003" name="Nature">
        <title>Global analysis of protein expression in yeast.</title>
        <authorList>
            <person name="Ghaemmaghami S."/>
            <person name="Huh W.-K."/>
            <person name="Bower K."/>
            <person name="Howson R.W."/>
            <person name="Belle A."/>
            <person name="Dephoure N."/>
            <person name="O'Shea E.K."/>
            <person name="Weissman J.S."/>
        </authorList>
    </citation>
    <scope>LEVEL OF PROTEIN EXPRESSION [LARGE SCALE ANALYSIS]</scope>
</reference>
<reference key="11">
    <citation type="journal article" date="2010" name="Mol. Biol. Cell">
        <title>Compartment-specific synthesis of phosphatidylethanolamine is required for normal heavy metal resistance.</title>
        <authorList>
            <person name="Gulshan K."/>
            <person name="Shahi P."/>
            <person name="Moye-Rowley W.S."/>
        </authorList>
    </citation>
    <scope>FUNCTION</scope>
    <scope>INTERACTION WITH PSD2</scope>
</reference>
<reference key="12">
    <citation type="journal article" date="2014" name="J. Biol. Chem.">
        <title>An assembly of proteins and lipid domains regulates transport of phosphatidylserine to phosphatidylserine decarboxylase 2 in Saccharomyces cerevisiae.</title>
        <authorList>
            <person name="Riekhof W.R."/>
            <person name="Wu W.I."/>
            <person name="Jones J.L."/>
            <person name="Nikrad M."/>
            <person name="Chan M.M."/>
            <person name="Loewen C.J."/>
            <person name="Voelker D.R."/>
        </authorList>
    </citation>
    <scope>FUNCTION</scope>
    <scope>INTERACTION WITH PSD2 AND PBI1</scope>
</reference>
<name>PDR17_YEAST</name>
<evidence type="ECO:0000255" key="1">
    <source>
        <dbReference type="PROSITE-ProRule" id="PRU00056"/>
    </source>
</evidence>
<evidence type="ECO:0000269" key="2">
    <source>
    </source>
</evidence>
<evidence type="ECO:0000269" key="3">
    <source>
    </source>
</evidence>
<evidence type="ECO:0000269" key="4">
    <source>
    </source>
</evidence>
<evidence type="ECO:0000269" key="5">
    <source>
    </source>
</evidence>
<evidence type="ECO:0000269" key="6">
    <source>
    </source>
</evidence>
<evidence type="ECO:0000269" key="7">
    <source>
    </source>
</evidence>
<evidence type="ECO:0000269" key="8">
    <source>
    </source>
</evidence>
<evidence type="ECO:0000269" key="9">
    <source>
    </source>
</evidence>
<evidence type="ECO:0000303" key="10">
    <source>
    </source>
</evidence>
<evidence type="ECO:0000303" key="11">
    <source>
    </source>
</evidence>
<evidence type="ECO:0000303" key="12">
    <source>
    </source>
</evidence>
<proteinExistence type="evidence at protein level"/>
<gene>
    <name evidence="12" type="primary">PDR17</name>
    <name type="synonym">ISS1</name>
    <name evidence="10" type="synonym">PSTB2</name>
    <name evidence="11" type="synonym">SFH4</name>
    <name type="ordered locus">YNL264C</name>
    <name type="ORF">N0815</name>
</gene>
<sequence>MGLFSRKRDHTPAVPKEKLIPCDKIFLDPPAKYGNAPLLEPISEDQNEKYRAVLRHFQDDDLKLPENLNDLDNGTHANDRPLSDWEKFWLSRECFLRYLRANKWNTANAIKGLTKTLVWRREIGLTHGKEDKDPLTADKVAVENETGKQVILGFDNAKRPLYYMKNGRQNTESSFRQVQELVYMMETATTVAPQGVEKITVLVDFKSYKEPGIITDKAPPISIARMCLNVMQDHYPERLAKCVLINIPWFAWAFLKMMYPFLDPATKAKAIFDEPFENHIEPSQLDALYNGLLDFKYKHEVYWPDMVKKVDDLRLKRFDRFLKFGGIVGLSEYDTKGQHDELKYPVDMVI</sequence>
<organism>
    <name type="scientific">Saccharomyces cerevisiae (strain ATCC 204508 / S288c)</name>
    <name type="common">Baker's yeast</name>
    <dbReference type="NCBI Taxonomy" id="559292"/>
    <lineage>
        <taxon>Eukaryota</taxon>
        <taxon>Fungi</taxon>
        <taxon>Dikarya</taxon>
        <taxon>Ascomycota</taxon>
        <taxon>Saccharomycotina</taxon>
        <taxon>Saccharomycetes</taxon>
        <taxon>Saccharomycetales</taxon>
        <taxon>Saccharomycetaceae</taxon>
        <taxon>Saccharomyces</taxon>
    </lineage>
</organism>
<feature type="chain" id="PRO_0000210746" description="Phosphatidylinositol transfer protein PDR17">
    <location>
        <begin position="1"/>
        <end position="350"/>
    </location>
</feature>
<feature type="domain" description="CRAL-TRIO" evidence="1">
    <location>
        <begin position="139"/>
        <end position="297"/>
    </location>
</feature>
<comment type="function">
    <text evidence="2 3 7 8 9">Has phosphatidylinositol transfer activity (PubMed:10799527, PubMed:10848624, PubMed:24366873). Involved in the regulation of the phospholipid composition of plasma- and endomembranes (PubMed:9890948). Altering plasma membrane composition may provide a possible mechanism for multidrug resistance (PubMed:9890948). Contributes to efficient phospholipase D1 activation and phospholipase B1 inhibition in the regulation of phospholipid turnover (PubMed:10848624). Forms a complex with phosphatidylserine decarboxylase PSD2 that seems essential for maintenance of vacuolar phosphatidylethanolamine (PE) levels (PubMed:20016005, PubMed:24366873). Allows interorganelle phosphatidylserine (PtdSer) transport via a process that involves the acceptor membrane complex PDR17-PDS2 that binds to PBI1 which in turn ligates to SCS2 and phosphatidic acid present in the donor membrane, forming a zone of apposition that facilitates PtdSer transfer (PubMed:24366873).</text>
</comment>
<comment type="catalytic activity">
    <reaction evidence="3">
        <text>a 1,2-diacyl-sn-glycero-3-phospho-(1D-myo-inositol)(in) = a 1,2-diacyl-sn-glycero-3-phospho-(1D-myo-inositol)(out)</text>
        <dbReference type="Rhea" id="RHEA:38691"/>
        <dbReference type="ChEBI" id="CHEBI:57880"/>
    </reaction>
    <physiologicalReaction direction="left-to-right" evidence="3">
        <dbReference type="Rhea" id="RHEA:38692"/>
    </physiologicalReaction>
</comment>
<comment type="subunit">
    <text evidence="7 8">Interacts with phosphatidylserine decarboxylase PSD2 (PubMed:20016005, PubMed:24366873). Also interacts with PBI1 (PubMed:24366873).</text>
</comment>
<comment type="interaction">
    <interactant intactId="EBI-2076838">
        <id>P53844</id>
    </interactant>
    <interactant intactId="EBI-14018">
        <id>P53037</id>
        <label>PSD2</label>
    </interactant>
    <organismsDiffer>false</organismsDiffer>
    <experiments>4</experiments>
</comment>
<comment type="interaction">
    <interactant intactId="EBI-2076838">
        <id>P53844</id>
    </interactant>
    <interactant intactId="EBI-3719178">
        <id>Q08984</id>
        <label>YPL272C</label>
    </interactant>
    <organismsDiffer>false</organismsDiffer>
    <experiments>4</experiments>
</comment>
<comment type="subcellular location">
    <subcellularLocation>
        <location evidence="4 5">Cytoplasm</location>
    </subcellularLocation>
    <subcellularLocation>
        <location evidence="4">Microsome</location>
    </subcellularLocation>
</comment>
<comment type="miscellaneous">
    <text evidence="6">Present with 5040 molecules/cell in log phase SD medium.</text>
</comment>
<accession>P53844</accession>
<accession>D6W0S9</accession>
<dbReference type="EMBL" id="X92494">
    <property type="protein sequence ID" value="CAA63233.1"/>
    <property type="molecule type" value="Genomic_DNA"/>
</dbReference>
<dbReference type="EMBL" id="Z71540">
    <property type="protein sequence ID" value="CAA96171.1"/>
    <property type="molecule type" value="Genomic_DNA"/>
</dbReference>
<dbReference type="EMBL" id="AY692928">
    <property type="protein sequence ID" value="AAT92947.1"/>
    <property type="molecule type" value="Genomic_DNA"/>
</dbReference>
<dbReference type="EMBL" id="BK006947">
    <property type="protein sequence ID" value="DAA10295.1"/>
    <property type="molecule type" value="Genomic_DNA"/>
</dbReference>
<dbReference type="PIR" id="S60917">
    <property type="entry name" value="S60917"/>
</dbReference>
<dbReference type="RefSeq" id="NP_014135.1">
    <property type="nucleotide sequence ID" value="NM_001183102.1"/>
</dbReference>
<dbReference type="SMR" id="P53844"/>
<dbReference type="BioGRID" id="35575">
    <property type="interactions" value="90"/>
</dbReference>
<dbReference type="ComplexPortal" id="CPX-1319">
    <property type="entry name" value="PSTB lipid transfer acceptor membrane complex"/>
</dbReference>
<dbReference type="DIP" id="DIP-2580N"/>
<dbReference type="FunCoup" id="P53844">
    <property type="interactions" value="150"/>
</dbReference>
<dbReference type="IntAct" id="P53844">
    <property type="interactions" value="3"/>
</dbReference>
<dbReference type="MINT" id="P53844"/>
<dbReference type="STRING" id="4932.YNL264C"/>
<dbReference type="SwissLipids" id="SLP:000000357"/>
<dbReference type="iPTMnet" id="P53844"/>
<dbReference type="PaxDb" id="4932-YNL264C"/>
<dbReference type="PeptideAtlas" id="P53844"/>
<dbReference type="EnsemblFungi" id="YNL264C_mRNA">
    <property type="protein sequence ID" value="YNL264C"/>
    <property type="gene ID" value="YNL264C"/>
</dbReference>
<dbReference type="GeneID" id="855457"/>
<dbReference type="KEGG" id="sce:YNL264C"/>
<dbReference type="AGR" id="SGD:S000005208"/>
<dbReference type="SGD" id="S000005208">
    <property type="gene designation" value="PDR17"/>
</dbReference>
<dbReference type="VEuPathDB" id="FungiDB:YNL264C"/>
<dbReference type="eggNOG" id="KOG1470">
    <property type="taxonomic scope" value="Eukaryota"/>
</dbReference>
<dbReference type="GeneTree" id="ENSGT00940000176626"/>
<dbReference type="HOGENOM" id="CLU_014001_1_1_1"/>
<dbReference type="InParanoid" id="P53844"/>
<dbReference type="OMA" id="RPLFYMK"/>
<dbReference type="OrthoDB" id="75724at2759"/>
<dbReference type="BioCyc" id="YEAST:G3O-33260-MONOMER"/>
<dbReference type="BioGRID-ORCS" id="855457">
    <property type="hits" value="2 hits in 10 CRISPR screens"/>
</dbReference>
<dbReference type="PRO" id="PR:P53844"/>
<dbReference type="Proteomes" id="UP000002311">
    <property type="component" value="Chromosome XIV"/>
</dbReference>
<dbReference type="RNAct" id="P53844">
    <property type="molecule type" value="protein"/>
</dbReference>
<dbReference type="GO" id="GO:0071944">
    <property type="term" value="C:cell periphery"/>
    <property type="evidence" value="ECO:0000314"/>
    <property type="project" value="SGD"/>
</dbReference>
<dbReference type="GO" id="GO:0005737">
    <property type="term" value="C:cytoplasm"/>
    <property type="evidence" value="ECO:0007005"/>
    <property type="project" value="SGD"/>
</dbReference>
<dbReference type="GO" id="GO:0005829">
    <property type="term" value="C:cytosol"/>
    <property type="evidence" value="ECO:0000314"/>
    <property type="project" value="SGD"/>
</dbReference>
<dbReference type="GO" id="GO:0005783">
    <property type="term" value="C:endoplasmic reticulum"/>
    <property type="evidence" value="ECO:0007669"/>
    <property type="project" value="UniProtKB-KW"/>
</dbReference>
<dbReference type="GO" id="GO:0005768">
    <property type="term" value="C:endosome"/>
    <property type="evidence" value="ECO:0000314"/>
    <property type="project" value="SGD"/>
</dbReference>
<dbReference type="GO" id="GO:0010008">
    <property type="term" value="C:endosome membrane"/>
    <property type="evidence" value="ECO:0000314"/>
    <property type="project" value="ComplexPortal"/>
</dbReference>
<dbReference type="GO" id="GO:0008526">
    <property type="term" value="F:phosphatidylinositol transfer activity"/>
    <property type="evidence" value="ECO:0000314"/>
    <property type="project" value="SGD"/>
</dbReference>
<dbReference type="GO" id="GO:0032934">
    <property type="term" value="F:sterol binding"/>
    <property type="evidence" value="ECO:0000314"/>
    <property type="project" value="SGD"/>
</dbReference>
<dbReference type="GO" id="GO:0043001">
    <property type="term" value="P:Golgi to plasma membrane protein transport"/>
    <property type="evidence" value="ECO:0000316"/>
    <property type="project" value="SGD"/>
</dbReference>
<dbReference type="GO" id="GO:0120010">
    <property type="term" value="P:intermembrane phospholipid transfer"/>
    <property type="evidence" value="ECO:0000303"/>
    <property type="project" value="ComplexPortal"/>
</dbReference>
<dbReference type="GO" id="GO:1901352">
    <property type="term" value="P:negative regulation of phosphatidylglycerol biosynthetic process"/>
    <property type="evidence" value="ECO:0000316"/>
    <property type="project" value="SGD"/>
</dbReference>
<dbReference type="GO" id="GO:0006658">
    <property type="term" value="P:phosphatidylserine metabolic process"/>
    <property type="evidence" value="ECO:0000315"/>
    <property type="project" value="SGD"/>
</dbReference>
<dbReference type="GO" id="GO:0008654">
    <property type="term" value="P:phospholipid biosynthetic process"/>
    <property type="evidence" value="ECO:0000316"/>
    <property type="project" value="SGD"/>
</dbReference>
<dbReference type="GO" id="GO:0015914">
    <property type="term" value="P:phospholipid transport"/>
    <property type="evidence" value="ECO:0000314"/>
    <property type="project" value="SGD"/>
</dbReference>
<dbReference type="GO" id="GO:2001247">
    <property type="term" value="P:positive regulation of phosphatidylcholine biosynthetic process"/>
    <property type="evidence" value="ECO:0000316"/>
    <property type="project" value="SGD"/>
</dbReference>
<dbReference type="GO" id="GO:0009410">
    <property type="term" value="P:response to xenobiotic stimulus"/>
    <property type="evidence" value="ECO:0000316"/>
    <property type="project" value="SGD"/>
</dbReference>
<dbReference type="GO" id="GO:0016126">
    <property type="term" value="P:sterol biosynthetic process"/>
    <property type="evidence" value="ECO:0000314"/>
    <property type="project" value="SGD"/>
</dbReference>
<dbReference type="CDD" id="cd00170">
    <property type="entry name" value="SEC14"/>
    <property type="match status" value="1"/>
</dbReference>
<dbReference type="FunFam" id="3.40.525.10:FF:000013">
    <property type="entry name" value="Phosphatidylinositol transfer protein PDR16"/>
    <property type="match status" value="1"/>
</dbReference>
<dbReference type="Gene3D" id="3.40.525.10">
    <property type="entry name" value="CRAL-TRIO lipid binding domain"/>
    <property type="match status" value="1"/>
</dbReference>
<dbReference type="InterPro" id="IPR001251">
    <property type="entry name" value="CRAL-TRIO_dom"/>
</dbReference>
<dbReference type="InterPro" id="IPR036865">
    <property type="entry name" value="CRAL-TRIO_dom_sf"/>
</dbReference>
<dbReference type="InterPro" id="IPR011074">
    <property type="entry name" value="CRAL/TRIO_N_dom"/>
</dbReference>
<dbReference type="InterPro" id="IPR036273">
    <property type="entry name" value="CRAL/TRIO_N_dom_sf"/>
</dbReference>
<dbReference type="InterPro" id="IPR052578">
    <property type="entry name" value="PI_Transfer_CRAL-TRIO"/>
</dbReference>
<dbReference type="PANTHER" id="PTHR45824">
    <property type="entry name" value="GH16843P"/>
    <property type="match status" value="1"/>
</dbReference>
<dbReference type="PANTHER" id="PTHR45824:SF5">
    <property type="entry name" value="PHOSPHATIDYLINOSITOL TRANSFER PROTEIN PDR17"/>
    <property type="match status" value="1"/>
</dbReference>
<dbReference type="Pfam" id="PF00650">
    <property type="entry name" value="CRAL_TRIO"/>
    <property type="match status" value="1"/>
</dbReference>
<dbReference type="Pfam" id="PF03765">
    <property type="entry name" value="CRAL_TRIO_N"/>
    <property type="match status" value="1"/>
</dbReference>
<dbReference type="SMART" id="SM01100">
    <property type="entry name" value="CRAL_TRIO_N"/>
    <property type="match status" value="1"/>
</dbReference>
<dbReference type="SMART" id="SM00516">
    <property type="entry name" value="SEC14"/>
    <property type="match status" value="1"/>
</dbReference>
<dbReference type="SUPFAM" id="SSF52087">
    <property type="entry name" value="CRAL/TRIO domain"/>
    <property type="match status" value="1"/>
</dbReference>
<dbReference type="SUPFAM" id="SSF46938">
    <property type="entry name" value="CRAL/TRIO N-terminal domain"/>
    <property type="match status" value="1"/>
</dbReference>
<dbReference type="PROSITE" id="PS50191">
    <property type="entry name" value="CRAL_TRIO"/>
    <property type="match status" value="1"/>
</dbReference>